<comment type="function">
    <text evidence="1">CIPK serine-threonine protein kinases interact with CBL proteins. Binding of a CBL protein to the regulatory NAF domain of CIPK protein lead to the activation of the kinase in a calcium-dependent manner (By similarity).</text>
</comment>
<comment type="catalytic activity">
    <reaction>
        <text>L-seryl-[protein] + ATP = O-phospho-L-seryl-[protein] + ADP + H(+)</text>
        <dbReference type="Rhea" id="RHEA:17989"/>
        <dbReference type="Rhea" id="RHEA-COMP:9863"/>
        <dbReference type="Rhea" id="RHEA-COMP:11604"/>
        <dbReference type="ChEBI" id="CHEBI:15378"/>
        <dbReference type="ChEBI" id="CHEBI:29999"/>
        <dbReference type="ChEBI" id="CHEBI:30616"/>
        <dbReference type="ChEBI" id="CHEBI:83421"/>
        <dbReference type="ChEBI" id="CHEBI:456216"/>
        <dbReference type="EC" id="2.7.11.1"/>
    </reaction>
</comment>
<comment type="catalytic activity">
    <reaction>
        <text>L-threonyl-[protein] + ATP = O-phospho-L-threonyl-[protein] + ADP + H(+)</text>
        <dbReference type="Rhea" id="RHEA:46608"/>
        <dbReference type="Rhea" id="RHEA-COMP:11060"/>
        <dbReference type="Rhea" id="RHEA-COMP:11605"/>
        <dbReference type="ChEBI" id="CHEBI:15378"/>
        <dbReference type="ChEBI" id="CHEBI:30013"/>
        <dbReference type="ChEBI" id="CHEBI:30616"/>
        <dbReference type="ChEBI" id="CHEBI:61977"/>
        <dbReference type="ChEBI" id="CHEBI:456216"/>
        <dbReference type="EC" id="2.7.11.1"/>
    </reaction>
</comment>
<comment type="cofactor">
    <cofactor evidence="1">
        <name>Mn(2+)</name>
        <dbReference type="ChEBI" id="CHEBI:29035"/>
    </cofactor>
</comment>
<comment type="domain">
    <text evidence="1">The activation loop within the kinase domain is the target of phosphorylation/activation by upstream protein kinases. The PPI motif mediates the interaction with the ABI (abscisic acid-insensitive) phosphatases (By similarity).</text>
</comment>
<comment type="similarity">
    <text evidence="5">Belongs to the protein kinase superfamily. CAMK Ser/Thr protein kinase family. SNF1 subfamily.</text>
</comment>
<comment type="sequence caution" evidence="5">
    <conflict type="frameshift">
        <sequence resource="EMBL-CDS" id="AAB62693"/>
    </conflict>
</comment>
<comment type="sequence caution" evidence="5">
    <conflict type="erroneous initiation">
        <sequence resource="EMBL-CDS" id="BAF28996"/>
    </conflict>
    <text>Extended N-terminus.</text>
</comment>
<sequence length="439" mass="50324">MESRGKILMERYELGRLLGKGTFGKVHYARNLESNQSVAIKMMDKQQVLKVGLSEQIRREITTMRLVAHKNIVQLHEVMATRNKIYFVMEYVKGGELFEKVAKRGKLTEVVAHKYFQQLISAVDYCHSRGVYHRDLKPENLLLDENENLKVSDFGLSALSESKRQDGLLHTTCGTPAYVAPEVISKIGYDGAKSDIWSCGVILFVLVAGYLPFQGPNLMEMYRKIQHGEFRCPGWFSRKLQKLLYKIMDPNPSTRISIQKIKESTWFRKGPEENRILKERTLNENTTKNVALVLGVRRKKNAHEDVKPMSVTNLNAFEIISFSKGFDLSGMFIVKEWRNEARFTSDKSASTIISKLEDVAKALNLRVRKKDNGVVKMQGRKEGRNGVLQFDIEIFEVTTSYHIIEMKQTSGDSLEYRQLLEEGIRPALKDIVLAWHGDE</sequence>
<proteinExistence type="evidence at transcript level"/>
<keyword id="KW-0067">ATP-binding</keyword>
<keyword id="KW-0418">Kinase</keyword>
<keyword id="KW-0464">Manganese</keyword>
<keyword id="KW-0547">Nucleotide-binding</keyword>
<keyword id="KW-1185">Reference proteome</keyword>
<keyword id="KW-0723">Serine/threonine-protein kinase</keyword>
<keyword id="KW-0808">Transferase</keyword>
<feature type="chain" id="PRO_0000338372" description="CBL-interacting protein kinase 14">
    <location>
        <begin position="1"/>
        <end position="439"/>
    </location>
</feature>
<feature type="domain" description="Protein kinase" evidence="2">
    <location>
        <begin position="12"/>
        <end position="267"/>
    </location>
</feature>
<feature type="domain" description="NAF" evidence="3">
    <location>
        <begin position="298"/>
        <end position="333"/>
    </location>
</feature>
<feature type="region of interest" description="Activation loop" evidence="1">
    <location>
        <begin position="153"/>
        <end position="182"/>
    </location>
</feature>
<feature type="region of interest" description="PPI" evidence="1">
    <location>
        <begin position="338"/>
        <end position="367"/>
    </location>
</feature>
<feature type="active site" description="Proton acceptor" evidence="2 4">
    <location>
        <position position="135"/>
    </location>
</feature>
<feature type="binding site" evidence="2">
    <location>
        <begin position="18"/>
        <end position="26"/>
    </location>
    <ligand>
        <name>ATP</name>
        <dbReference type="ChEBI" id="CHEBI:30616"/>
    </ligand>
</feature>
<feature type="binding site" evidence="2">
    <location>
        <position position="41"/>
    </location>
    <ligand>
        <name>ATP</name>
        <dbReference type="ChEBI" id="CHEBI:30616"/>
    </ligand>
</feature>
<feature type="sequence conflict" description="In Ref. 1; AAB62693." evidence="5" ref="1">
    <original>R</original>
    <variation>K</variation>
    <location>
        <position position="4"/>
    </location>
</feature>
<feature type="sequence conflict" description="In Ref. 1; AAB62693." evidence="5" ref="1">
    <original>R</original>
    <variation>K</variation>
    <location>
        <position position="16"/>
    </location>
</feature>
<feature type="sequence conflict" description="In Ref. 1; AAB62693." evidence="5" ref="1">
    <original>R</original>
    <variation>G</variation>
    <location>
        <position position="30"/>
    </location>
</feature>
<feature type="sequence conflict" description="In Ref. 1; AAB62693." evidence="5" ref="1">
    <original>V</original>
    <variation>F</variation>
    <location>
        <position position="51"/>
    </location>
</feature>
<feature type="sequence conflict" description="In Ref. 1; AAB62693." evidence="5" ref="1">
    <original>A</original>
    <variation>G</variation>
    <location>
        <position position="208"/>
    </location>
</feature>
<feature type="sequence conflict" description="In Ref. 1; AAB62693." evidence="5" ref="1">
    <original>K</original>
    <variation>N</variation>
    <location>
        <position position="242"/>
    </location>
</feature>
<feature type="sequence conflict" description="In Ref. 1; AAB62693." evidence="5" ref="1">
    <original>TT</original>
    <variation>PP</variation>
    <location>
        <begin position="286"/>
        <end position="287"/>
    </location>
</feature>
<feature type="sequence conflict" description="In Ref. 1; AAB62693." evidence="5" ref="1">
    <original>R</original>
    <variation>P</variation>
    <location>
        <position position="298"/>
    </location>
</feature>
<feature type="sequence conflict" description="In Ref. 1; AAB62693." evidence="5" ref="1">
    <original>D</original>
    <variation>N</variation>
    <location>
        <position position="346"/>
    </location>
</feature>
<feature type="sequence conflict" description="In Ref. 1; AAB62693." evidence="5" ref="1">
    <original>E</original>
    <variation>K</variation>
    <location>
        <position position="393"/>
    </location>
</feature>
<accession>Q2QYM3</accession>
<accession>A0A0P0Y685</accession>
<accession>B7F9N0</accession>
<accession>O24180</accession>
<dbReference type="EC" id="2.7.11.1"/>
<dbReference type="EMBL" id="AF004947">
    <property type="protein sequence ID" value="AAB62693.1"/>
    <property type="status" value="ALT_FRAME"/>
    <property type="molecule type" value="mRNA"/>
</dbReference>
<dbReference type="EMBL" id="AB264036">
    <property type="protein sequence ID" value="BAF34612.1"/>
    <property type="molecule type" value="mRNA"/>
</dbReference>
<dbReference type="EMBL" id="DP000011">
    <property type="protein sequence ID" value="ABA96272.1"/>
    <property type="molecule type" value="Genomic_DNA"/>
</dbReference>
<dbReference type="EMBL" id="AP008218">
    <property type="protein sequence ID" value="BAF28996.2"/>
    <property type="status" value="ALT_INIT"/>
    <property type="molecule type" value="Genomic_DNA"/>
</dbReference>
<dbReference type="EMBL" id="AP014968">
    <property type="protein sequence ID" value="BAT15582.1"/>
    <property type="molecule type" value="Genomic_DNA"/>
</dbReference>
<dbReference type="EMBL" id="CM000148">
    <property type="protein sequence ID" value="EAZ17197.1"/>
    <property type="molecule type" value="Genomic_DNA"/>
</dbReference>
<dbReference type="EMBL" id="AK242733">
    <property type="protein sequence ID" value="BAH01328.1"/>
    <property type="molecule type" value="mRNA"/>
</dbReference>
<dbReference type="EMBL" id="AK243050">
    <property type="protein sequence ID" value="BAH01425.1"/>
    <property type="molecule type" value="mRNA"/>
</dbReference>
<dbReference type="PIR" id="T03444">
    <property type="entry name" value="T03444"/>
</dbReference>
<dbReference type="RefSeq" id="XP_015620143.1">
    <property type="nucleotide sequence ID" value="XM_015764657.1"/>
</dbReference>
<dbReference type="SMR" id="Q2QYM3"/>
<dbReference type="FunCoup" id="Q2QYM3">
    <property type="interactions" value="451"/>
</dbReference>
<dbReference type="STRING" id="39947.Q2QYM3"/>
<dbReference type="PaxDb" id="39947-Q2QYM3"/>
<dbReference type="EnsemblPlants" id="Os12t0113500-01">
    <property type="protein sequence ID" value="Os12t0113500-01"/>
    <property type="gene ID" value="Os12g0113500"/>
</dbReference>
<dbReference type="EnsemblPlants" id="Os12t0113500-02">
    <property type="protein sequence ID" value="Os12t0113500-02"/>
    <property type="gene ID" value="Os12g0113500"/>
</dbReference>
<dbReference type="Gramene" id="Os12t0113500-01">
    <property type="protein sequence ID" value="Os12t0113500-01"/>
    <property type="gene ID" value="Os12g0113500"/>
</dbReference>
<dbReference type="Gramene" id="Os12t0113500-02">
    <property type="protein sequence ID" value="Os12t0113500-02"/>
    <property type="gene ID" value="Os12g0113500"/>
</dbReference>
<dbReference type="KEGG" id="dosa:Os12g0113500"/>
<dbReference type="eggNOG" id="KOG0583">
    <property type="taxonomic scope" value="Eukaryota"/>
</dbReference>
<dbReference type="HOGENOM" id="CLU_000288_59_0_1"/>
<dbReference type="InParanoid" id="Q2QYM3"/>
<dbReference type="OMA" id="MYRKIQN"/>
<dbReference type="OrthoDB" id="541276at2759"/>
<dbReference type="Proteomes" id="UP000000763">
    <property type="component" value="Chromosome 12"/>
</dbReference>
<dbReference type="Proteomes" id="UP000007752">
    <property type="component" value="Chromosome 11"/>
</dbReference>
<dbReference type="Proteomes" id="UP000059680">
    <property type="component" value="Chromosome 12"/>
</dbReference>
<dbReference type="GO" id="GO:0005524">
    <property type="term" value="F:ATP binding"/>
    <property type="evidence" value="ECO:0007669"/>
    <property type="project" value="UniProtKB-KW"/>
</dbReference>
<dbReference type="GO" id="GO:0106310">
    <property type="term" value="F:protein serine kinase activity"/>
    <property type="evidence" value="ECO:0007669"/>
    <property type="project" value="RHEA"/>
</dbReference>
<dbReference type="GO" id="GO:0004674">
    <property type="term" value="F:protein serine/threonine kinase activity"/>
    <property type="evidence" value="ECO:0000318"/>
    <property type="project" value="GO_Central"/>
</dbReference>
<dbReference type="GO" id="GO:0007165">
    <property type="term" value="P:signal transduction"/>
    <property type="evidence" value="ECO:0000318"/>
    <property type="project" value="GO_Central"/>
</dbReference>
<dbReference type="CDD" id="cd12195">
    <property type="entry name" value="CIPK_C"/>
    <property type="match status" value="1"/>
</dbReference>
<dbReference type="FunFam" id="1.10.510.10:FF:000279">
    <property type="entry name" value="Non-specific serine/threonine protein kinase"/>
    <property type="match status" value="1"/>
</dbReference>
<dbReference type="FunFam" id="3.30.200.20:FF:000096">
    <property type="entry name" value="Non-specific serine/threonine protein kinase"/>
    <property type="match status" value="1"/>
</dbReference>
<dbReference type="FunFam" id="3.30.310.80:FF:000005">
    <property type="entry name" value="Non-specific serine/threonine protein kinase"/>
    <property type="match status" value="1"/>
</dbReference>
<dbReference type="Gene3D" id="3.30.310.80">
    <property type="entry name" value="Kinase associated domain 1, KA1"/>
    <property type="match status" value="1"/>
</dbReference>
<dbReference type="Gene3D" id="3.30.200.20">
    <property type="entry name" value="Phosphorylase Kinase, domain 1"/>
    <property type="match status" value="1"/>
</dbReference>
<dbReference type="Gene3D" id="1.10.510.10">
    <property type="entry name" value="Transferase(Phosphotransferase) domain 1"/>
    <property type="match status" value="1"/>
</dbReference>
<dbReference type="InterPro" id="IPR028375">
    <property type="entry name" value="KA1/Ssp2_C"/>
</dbReference>
<dbReference type="InterPro" id="IPR011009">
    <property type="entry name" value="Kinase-like_dom_sf"/>
</dbReference>
<dbReference type="InterPro" id="IPR018451">
    <property type="entry name" value="NAF/FISL_domain"/>
</dbReference>
<dbReference type="InterPro" id="IPR004041">
    <property type="entry name" value="NAF_dom"/>
</dbReference>
<dbReference type="InterPro" id="IPR000719">
    <property type="entry name" value="Prot_kinase_dom"/>
</dbReference>
<dbReference type="InterPro" id="IPR017441">
    <property type="entry name" value="Protein_kinase_ATP_BS"/>
</dbReference>
<dbReference type="InterPro" id="IPR008271">
    <property type="entry name" value="Ser/Thr_kinase_AS"/>
</dbReference>
<dbReference type="PANTHER" id="PTHR43895">
    <property type="entry name" value="CALCIUM/CALMODULIN-DEPENDENT PROTEIN KINASE KINASE-RELATED"/>
    <property type="match status" value="1"/>
</dbReference>
<dbReference type="PANTHER" id="PTHR43895:SF84">
    <property type="entry name" value="CBL-INTERACTING PROTEIN KINASE 15"/>
    <property type="match status" value="1"/>
</dbReference>
<dbReference type="Pfam" id="PF03822">
    <property type="entry name" value="NAF"/>
    <property type="match status" value="1"/>
</dbReference>
<dbReference type="Pfam" id="PF00069">
    <property type="entry name" value="Pkinase"/>
    <property type="match status" value="1"/>
</dbReference>
<dbReference type="SMART" id="SM00220">
    <property type="entry name" value="S_TKc"/>
    <property type="match status" value="1"/>
</dbReference>
<dbReference type="SUPFAM" id="SSF103243">
    <property type="entry name" value="KA1-like"/>
    <property type="match status" value="1"/>
</dbReference>
<dbReference type="SUPFAM" id="SSF56112">
    <property type="entry name" value="Protein kinase-like (PK-like)"/>
    <property type="match status" value="1"/>
</dbReference>
<dbReference type="PROSITE" id="PS50816">
    <property type="entry name" value="NAF"/>
    <property type="match status" value="1"/>
</dbReference>
<dbReference type="PROSITE" id="PS00107">
    <property type="entry name" value="PROTEIN_KINASE_ATP"/>
    <property type="match status" value="1"/>
</dbReference>
<dbReference type="PROSITE" id="PS50011">
    <property type="entry name" value="PROTEIN_KINASE_DOM"/>
    <property type="match status" value="1"/>
</dbReference>
<dbReference type="PROSITE" id="PS00108">
    <property type="entry name" value="PROTEIN_KINASE_ST"/>
    <property type="match status" value="1"/>
</dbReference>
<reference key="1">
    <citation type="submission" date="1997-05" db="EMBL/GenBank/DDBJ databases">
        <title>Nucleotide sequence of a novel protein kinase in rice.</title>
        <authorList>
            <person name="Yun C.-H."/>
            <person name="Lee J.S."/>
            <person name="Lee M.C."/>
            <person name="Yun K.J."/>
            <person name="Park Y.J."/>
            <person name="Eun M.Y."/>
        </authorList>
    </citation>
    <scope>NUCLEOTIDE SEQUENCE [MRNA]</scope>
    <source>
        <strain>cv. Ilpoombyeo</strain>
        <tissue>Seedling</tissue>
    </source>
</reference>
<reference key="2">
    <citation type="submission" date="2006-06" db="EMBL/GenBank/DDBJ databases">
        <title>Oryza sativa (japonica cultivar-group) CBL-interacting protein kinase mRNA.</title>
        <authorList>
            <person name="Kurusu T."/>
            <person name="Hamada J."/>
            <person name="Kuchitsu K."/>
        </authorList>
    </citation>
    <scope>NUCLEOTIDE SEQUENCE [MRNA]</scope>
    <source>
        <strain>cv. Nipponbare</strain>
    </source>
</reference>
<reference key="3">
    <citation type="journal article" date="2005" name="BMC Biol.">
        <title>The sequence of rice chromosomes 11 and 12, rich in disease resistance genes and recent gene duplications.</title>
        <authorList>
            <consortium name="The rice chromosomes 11 and 12 sequencing consortia"/>
        </authorList>
    </citation>
    <scope>NUCLEOTIDE SEQUENCE [LARGE SCALE GENOMIC DNA]</scope>
    <source>
        <strain>cv. Nipponbare</strain>
    </source>
</reference>
<reference key="4">
    <citation type="journal article" date="2005" name="Nature">
        <title>The map-based sequence of the rice genome.</title>
        <authorList>
            <consortium name="International rice genome sequencing project (IRGSP)"/>
        </authorList>
    </citation>
    <scope>NUCLEOTIDE SEQUENCE [LARGE SCALE GENOMIC DNA]</scope>
    <source>
        <strain>cv. Nipponbare</strain>
    </source>
</reference>
<reference key="5">
    <citation type="journal article" date="2008" name="Nucleic Acids Res.">
        <title>The rice annotation project database (RAP-DB): 2008 update.</title>
        <authorList>
            <consortium name="The rice annotation project (RAP)"/>
        </authorList>
    </citation>
    <scope>GENOME REANNOTATION</scope>
    <source>
        <strain>cv. Nipponbare</strain>
    </source>
</reference>
<reference key="6">
    <citation type="journal article" date="2013" name="Rice">
        <title>Improvement of the Oryza sativa Nipponbare reference genome using next generation sequence and optical map data.</title>
        <authorList>
            <person name="Kawahara Y."/>
            <person name="de la Bastide M."/>
            <person name="Hamilton J.P."/>
            <person name="Kanamori H."/>
            <person name="McCombie W.R."/>
            <person name="Ouyang S."/>
            <person name="Schwartz D.C."/>
            <person name="Tanaka T."/>
            <person name="Wu J."/>
            <person name="Zhou S."/>
            <person name="Childs K.L."/>
            <person name="Davidson R.M."/>
            <person name="Lin H."/>
            <person name="Quesada-Ocampo L."/>
            <person name="Vaillancourt B."/>
            <person name="Sakai H."/>
            <person name="Lee S.S."/>
            <person name="Kim J."/>
            <person name="Numa H."/>
            <person name="Itoh T."/>
            <person name="Buell C.R."/>
            <person name="Matsumoto T."/>
        </authorList>
    </citation>
    <scope>GENOME REANNOTATION</scope>
    <source>
        <strain>cv. Nipponbare</strain>
    </source>
</reference>
<reference key="7">
    <citation type="journal article" date="2005" name="PLoS Biol.">
        <title>The genomes of Oryza sativa: a history of duplications.</title>
        <authorList>
            <person name="Yu J."/>
            <person name="Wang J."/>
            <person name="Lin W."/>
            <person name="Li S."/>
            <person name="Li H."/>
            <person name="Zhou J."/>
            <person name="Ni P."/>
            <person name="Dong W."/>
            <person name="Hu S."/>
            <person name="Zeng C."/>
            <person name="Zhang J."/>
            <person name="Zhang Y."/>
            <person name="Li R."/>
            <person name="Xu Z."/>
            <person name="Li S."/>
            <person name="Li X."/>
            <person name="Zheng H."/>
            <person name="Cong L."/>
            <person name="Lin L."/>
            <person name="Yin J."/>
            <person name="Geng J."/>
            <person name="Li G."/>
            <person name="Shi J."/>
            <person name="Liu J."/>
            <person name="Lv H."/>
            <person name="Li J."/>
            <person name="Wang J."/>
            <person name="Deng Y."/>
            <person name="Ran L."/>
            <person name="Shi X."/>
            <person name="Wang X."/>
            <person name="Wu Q."/>
            <person name="Li C."/>
            <person name="Ren X."/>
            <person name="Wang J."/>
            <person name="Wang X."/>
            <person name="Li D."/>
            <person name="Liu D."/>
            <person name="Zhang X."/>
            <person name="Ji Z."/>
            <person name="Zhao W."/>
            <person name="Sun Y."/>
            <person name="Zhang Z."/>
            <person name="Bao J."/>
            <person name="Han Y."/>
            <person name="Dong L."/>
            <person name="Ji J."/>
            <person name="Chen P."/>
            <person name="Wu S."/>
            <person name="Liu J."/>
            <person name="Xiao Y."/>
            <person name="Bu D."/>
            <person name="Tan J."/>
            <person name="Yang L."/>
            <person name="Ye C."/>
            <person name="Zhang J."/>
            <person name="Xu J."/>
            <person name="Zhou Y."/>
            <person name="Yu Y."/>
            <person name="Zhang B."/>
            <person name="Zhuang S."/>
            <person name="Wei H."/>
            <person name="Liu B."/>
            <person name="Lei M."/>
            <person name="Yu H."/>
            <person name="Li Y."/>
            <person name="Xu H."/>
            <person name="Wei S."/>
            <person name="He X."/>
            <person name="Fang L."/>
            <person name="Zhang Z."/>
            <person name="Zhang Y."/>
            <person name="Huang X."/>
            <person name="Su Z."/>
            <person name="Tong W."/>
            <person name="Li J."/>
            <person name="Tong Z."/>
            <person name="Li S."/>
            <person name="Ye J."/>
            <person name="Wang L."/>
            <person name="Fang L."/>
            <person name="Lei T."/>
            <person name="Chen C.-S."/>
            <person name="Chen H.-C."/>
            <person name="Xu Z."/>
            <person name="Li H."/>
            <person name="Huang H."/>
            <person name="Zhang F."/>
            <person name="Xu H."/>
            <person name="Li N."/>
            <person name="Zhao C."/>
            <person name="Li S."/>
            <person name="Dong L."/>
            <person name="Huang Y."/>
            <person name="Li L."/>
            <person name="Xi Y."/>
            <person name="Qi Q."/>
            <person name="Li W."/>
            <person name="Zhang B."/>
            <person name="Hu W."/>
            <person name="Zhang Y."/>
            <person name="Tian X."/>
            <person name="Jiao Y."/>
            <person name="Liang X."/>
            <person name="Jin J."/>
            <person name="Gao L."/>
            <person name="Zheng W."/>
            <person name="Hao B."/>
            <person name="Liu S.-M."/>
            <person name="Wang W."/>
            <person name="Yuan L."/>
            <person name="Cao M."/>
            <person name="McDermott J."/>
            <person name="Samudrala R."/>
            <person name="Wang J."/>
            <person name="Wong G.K.-S."/>
            <person name="Yang H."/>
        </authorList>
    </citation>
    <scope>NUCLEOTIDE SEQUENCE [LARGE SCALE GENOMIC DNA]</scope>
    <source>
        <strain>cv. Nipponbare</strain>
    </source>
</reference>
<reference key="8">
    <citation type="submission" date="2006-10" db="EMBL/GenBank/DDBJ databases">
        <title>Oryza sativa full length cDNA.</title>
        <authorList>
            <consortium name="The rice full-length cDNA consortium"/>
        </authorList>
    </citation>
    <scope>NUCLEOTIDE SEQUENCE [LARGE SCALE MRNA]</scope>
    <source>
        <strain>cv. Nipponbare</strain>
    </source>
</reference>
<reference key="9">
    <citation type="journal article" date="2004" name="Plant Physiol.">
        <title>Calcium sensors and their interacting protein kinases: genomics of the Arabidopsis and rice CBL-CIPK signaling networks.</title>
        <authorList>
            <person name="Kolukisaoglu U."/>
            <person name="Weinl S."/>
            <person name="Blazevic D."/>
            <person name="Batistic O."/>
            <person name="Kudla J."/>
        </authorList>
    </citation>
    <scope>GENE FAMILY</scope>
    <scope>NOMENCLATURE</scope>
</reference>
<organism>
    <name type="scientific">Oryza sativa subsp. japonica</name>
    <name type="common">Rice</name>
    <dbReference type="NCBI Taxonomy" id="39947"/>
    <lineage>
        <taxon>Eukaryota</taxon>
        <taxon>Viridiplantae</taxon>
        <taxon>Streptophyta</taxon>
        <taxon>Embryophyta</taxon>
        <taxon>Tracheophyta</taxon>
        <taxon>Spermatophyta</taxon>
        <taxon>Magnoliopsida</taxon>
        <taxon>Liliopsida</taxon>
        <taxon>Poales</taxon>
        <taxon>Poaceae</taxon>
        <taxon>BOP clade</taxon>
        <taxon>Oryzoideae</taxon>
        <taxon>Oryzeae</taxon>
        <taxon>Oryzinae</taxon>
        <taxon>Oryza</taxon>
        <taxon>Oryza sativa</taxon>
    </lineage>
</organism>
<protein>
    <recommendedName>
        <fullName>CBL-interacting protein kinase 14</fullName>
        <ecNumber>2.7.11.1</ecNumber>
    </recommendedName>
    <alternativeName>
        <fullName>OsCIPK14</fullName>
    </alternativeName>
</protein>
<evidence type="ECO:0000250" key="1"/>
<evidence type="ECO:0000255" key="2">
    <source>
        <dbReference type="PROSITE-ProRule" id="PRU00159"/>
    </source>
</evidence>
<evidence type="ECO:0000255" key="3">
    <source>
        <dbReference type="PROSITE-ProRule" id="PRU00256"/>
    </source>
</evidence>
<evidence type="ECO:0000255" key="4">
    <source>
        <dbReference type="PROSITE-ProRule" id="PRU10027"/>
    </source>
</evidence>
<evidence type="ECO:0000305" key="5"/>
<gene>
    <name type="primary">CIPK14</name>
    <name type="ordered locus">Os12g0113500</name>
    <name type="ordered locus">LOC_Os12g02200</name>
    <name type="ORF">OsJ_031406</name>
</gene>
<name>CIPKE_ORYSJ</name>